<reference key="1">
    <citation type="journal article" date="2007" name="Environ. Microbiol.">
        <title>Whole-genome analysis of the ammonia-oxidizing bacterium, Nitrosomonas eutropha C91: implications for niche adaptation.</title>
        <authorList>
            <person name="Stein L.Y."/>
            <person name="Arp D.J."/>
            <person name="Berube P.M."/>
            <person name="Chain P.S."/>
            <person name="Hauser L."/>
            <person name="Jetten M.S."/>
            <person name="Klotz M.G."/>
            <person name="Larimer F.W."/>
            <person name="Norton J.M."/>
            <person name="Op den Camp H.J.M."/>
            <person name="Shin M."/>
            <person name="Wei X."/>
        </authorList>
    </citation>
    <scope>NUCLEOTIDE SEQUENCE [LARGE SCALE GENOMIC DNA]</scope>
    <source>
        <strain>DSM 101675 / C91 / Nm57</strain>
    </source>
</reference>
<protein>
    <recommendedName>
        <fullName evidence="1">Valine--tRNA ligase</fullName>
        <ecNumber evidence="1">6.1.1.9</ecNumber>
    </recommendedName>
    <alternativeName>
        <fullName evidence="1">Valyl-tRNA synthetase</fullName>
        <shortName evidence="1">ValRS</shortName>
    </alternativeName>
</protein>
<accession>Q0AIF2</accession>
<proteinExistence type="inferred from homology"/>
<comment type="function">
    <text evidence="1">Catalyzes the attachment of valine to tRNA(Val). As ValRS can inadvertently accommodate and process structurally similar amino acids such as threonine, to avoid such errors, it has a 'posttransfer' editing activity that hydrolyzes mischarged Thr-tRNA(Val) in a tRNA-dependent manner.</text>
</comment>
<comment type="catalytic activity">
    <reaction evidence="1">
        <text>tRNA(Val) + L-valine + ATP = L-valyl-tRNA(Val) + AMP + diphosphate</text>
        <dbReference type="Rhea" id="RHEA:10704"/>
        <dbReference type="Rhea" id="RHEA-COMP:9672"/>
        <dbReference type="Rhea" id="RHEA-COMP:9708"/>
        <dbReference type="ChEBI" id="CHEBI:30616"/>
        <dbReference type="ChEBI" id="CHEBI:33019"/>
        <dbReference type="ChEBI" id="CHEBI:57762"/>
        <dbReference type="ChEBI" id="CHEBI:78442"/>
        <dbReference type="ChEBI" id="CHEBI:78537"/>
        <dbReference type="ChEBI" id="CHEBI:456215"/>
        <dbReference type="EC" id="6.1.1.9"/>
    </reaction>
</comment>
<comment type="subunit">
    <text evidence="1">Monomer.</text>
</comment>
<comment type="subcellular location">
    <subcellularLocation>
        <location evidence="1">Cytoplasm</location>
    </subcellularLocation>
</comment>
<comment type="domain">
    <text evidence="1">ValRS has two distinct active sites: one for aminoacylation and one for editing. The misactivated threonine is translocated from the active site to the editing site.</text>
</comment>
<comment type="domain">
    <text evidence="1">The C-terminal coiled-coil domain is crucial for aminoacylation activity.</text>
</comment>
<comment type="similarity">
    <text evidence="1">Belongs to the class-I aminoacyl-tRNA synthetase family. ValS type 1 subfamily.</text>
</comment>
<dbReference type="EC" id="6.1.1.9" evidence="1"/>
<dbReference type="EMBL" id="CP000450">
    <property type="protein sequence ID" value="ABI58874.1"/>
    <property type="molecule type" value="Genomic_DNA"/>
</dbReference>
<dbReference type="RefSeq" id="WP_011633715.1">
    <property type="nucleotide sequence ID" value="NC_008344.1"/>
</dbReference>
<dbReference type="SMR" id="Q0AIF2"/>
<dbReference type="STRING" id="335283.Neut_0602"/>
<dbReference type="KEGG" id="net:Neut_0602"/>
<dbReference type="eggNOG" id="COG0525">
    <property type="taxonomic scope" value="Bacteria"/>
</dbReference>
<dbReference type="HOGENOM" id="CLU_001493_0_2_4"/>
<dbReference type="OrthoDB" id="9810365at2"/>
<dbReference type="Proteomes" id="UP000001966">
    <property type="component" value="Chromosome"/>
</dbReference>
<dbReference type="GO" id="GO:0005829">
    <property type="term" value="C:cytosol"/>
    <property type="evidence" value="ECO:0007669"/>
    <property type="project" value="TreeGrafter"/>
</dbReference>
<dbReference type="GO" id="GO:0002161">
    <property type="term" value="F:aminoacyl-tRNA deacylase activity"/>
    <property type="evidence" value="ECO:0007669"/>
    <property type="project" value="InterPro"/>
</dbReference>
<dbReference type="GO" id="GO:0005524">
    <property type="term" value="F:ATP binding"/>
    <property type="evidence" value="ECO:0007669"/>
    <property type="project" value="UniProtKB-UniRule"/>
</dbReference>
<dbReference type="GO" id="GO:0004832">
    <property type="term" value="F:valine-tRNA ligase activity"/>
    <property type="evidence" value="ECO:0007669"/>
    <property type="project" value="UniProtKB-UniRule"/>
</dbReference>
<dbReference type="GO" id="GO:0006438">
    <property type="term" value="P:valyl-tRNA aminoacylation"/>
    <property type="evidence" value="ECO:0007669"/>
    <property type="project" value="UniProtKB-UniRule"/>
</dbReference>
<dbReference type="CDD" id="cd07962">
    <property type="entry name" value="Anticodon_Ia_Val"/>
    <property type="match status" value="1"/>
</dbReference>
<dbReference type="CDD" id="cd00817">
    <property type="entry name" value="ValRS_core"/>
    <property type="match status" value="1"/>
</dbReference>
<dbReference type="FunFam" id="3.40.50.620:FF:000032">
    <property type="entry name" value="Valine--tRNA ligase"/>
    <property type="match status" value="1"/>
</dbReference>
<dbReference type="FunFam" id="1.10.730.10:FF:000009">
    <property type="entry name" value="Valine--tRNA ligase, mitochondrial"/>
    <property type="match status" value="1"/>
</dbReference>
<dbReference type="FunFam" id="3.40.50.620:FF:000078">
    <property type="entry name" value="Valine--tRNA ligase, mitochondrial"/>
    <property type="match status" value="1"/>
</dbReference>
<dbReference type="Gene3D" id="2.170.220.10">
    <property type="match status" value="1"/>
</dbReference>
<dbReference type="Gene3D" id="3.40.50.620">
    <property type="entry name" value="HUPs"/>
    <property type="match status" value="2"/>
</dbReference>
<dbReference type="Gene3D" id="1.10.730.10">
    <property type="entry name" value="Isoleucyl-tRNA Synthetase, Domain 1"/>
    <property type="match status" value="1"/>
</dbReference>
<dbReference type="Gene3D" id="1.10.287.380">
    <property type="entry name" value="Valyl-tRNA synthetase, C-terminal domain"/>
    <property type="match status" value="1"/>
</dbReference>
<dbReference type="Gene3D" id="3.90.740.10">
    <property type="entry name" value="Valyl/Leucyl/Isoleucyl-tRNA synthetase, editing domain"/>
    <property type="match status" value="1"/>
</dbReference>
<dbReference type="HAMAP" id="MF_02004">
    <property type="entry name" value="Val_tRNA_synth_type1"/>
    <property type="match status" value="1"/>
</dbReference>
<dbReference type="InterPro" id="IPR001412">
    <property type="entry name" value="aa-tRNA-synth_I_CS"/>
</dbReference>
<dbReference type="InterPro" id="IPR002300">
    <property type="entry name" value="aa-tRNA-synth_Ia"/>
</dbReference>
<dbReference type="InterPro" id="IPR033705">
    <property type="entry name" value="Anticodon_Ia_Val"/>
</dbReference>
<dbReference type="InterPro" id="IPR013155">
    <property type="entry name" value="M/V/L/I-tRNA-synth_anticd-bd"/>
</dbReference>
<dbReference type="InterPro" id="IPR014729">
    <property type="entry name" value="Rossmann-like_a/b/a_fold"/>
</dbReference>
<dbReference type="InterPro" id="IPR010978">
    <property type="entry name" value="tRNA-bd_arm"/>
</dbReference>
<dbReference type="InterPro" id="IPR009080">
    <property type="entry name" value="tRNAsynth_Ia_anticodon-bd"/>
</dbReference>
<dbReference type="InterPro" id="IPR037118">
    <property type="entry name" value="Val-tRNA_synth_C_sf"/>
</dbReference>
<dbReference type="InterPro" id="IPR019499">
    <property type="entry name" value="Val-tRNA_synth_tRNA-bd"/>
</dbReference>
<dbReference type="InterPro" id="IPR009008">
    <property type="entry name" value="Val/Leu/Ile-tRNA-synth_edit"/>
</dbReference>
<dbReference type="InterPro" id="IPR002303">
    <property type="entry name" value="Valyl-tRNA_ligase"/>
</dbReference>
<dbReference type="NCBIfam" id="NF004349">
    <property type="entry name" value="PRK05729.1"/>
    <property type="match status" value="1"/>
</dbReference>
<dbReference type="NCBIfam" id="TIGR00422">
    <property type="entry name" value="valS"/>
    <property type="match status" value="1"/>
</dbReference>
<dbReference type="PANTHER" id="PTHR11946:SF93">
    <property type="entry name" value="VALINE--TRNA LIGASE, CHLOROPLASTIC_MITOCHONDRIAL 2"/>
    <property type="match status" value="1"/>
</dbReference>
<dbReference type="PANTHER" id="PTHR11946">
    <property type="entry name" value="VALYL-TRNA SYNTHETASES"/>
    <property type="match status" value="1"/>
</dbReference>
<dbReference type="Pfam" id="PF08264">
    <property type="entry name" value="Anticodon_1"/>
    <property type="match status" value="1"/>
</dbReference>
<dbReference type="Pfam" id="PF00133">
    <property type="entry name" value="tRNA-synt_1"/>
    <property type="match status" value="1"/>
</dbReference>
<dbReference type="Pfam" id="PF10458">
    <property type="entry name" value="Val_tRNA-synt_C"/>
    <property type="match status" value="1"/>
</dbReference>
<dbReference type="PRINTS" id="PR00986">
    <property type="entry name" value="TRNASYNTHVAL"/>
</dbReference>
<dbReference type="SUPFAM" id="SSF47323">
    <property type="entry name" value="Anticodon-binding domain of a subclass of class I aminoacyl-tRNA synthetases"/>
    <property type="match status" value="1"/>
</dbReference>
<dbReference type="SUPFAM" id="SSF52374">
    <property type="entry name" value="Nucleotidylyl transferase"/>
    <property type="match status" value="1"/>
</dbReference>
<dbReference type="SUPFAM" id="SSF46589">
    <property type="entry name" value="tRNA-binding arm"/>
    <property type="match status" value="1"/>
</dbReference>
<dbReference type="SUPFAM" id="SSF50677">
    <property type="entry name" value="ValRS/IleRS/LeuRS editing domain"/>
    <property type="match status" value="1"/>
</dbReference>
<dbReference type="PROSITE" id="PS00178">
    <property type="entry name" value="AA_TRNA_LIGASE_I"/>
    <property type="match status" value="1"/>
</dbReference>
<sequence>MELAKSFDPKDIENHWYSVWETAGYFSPAKREEVNAYCIMLPPPNVTGTLHMGHAFQHTLMDALIRYHRMLGDNTLWQPGTDHAGIATQIVVERQLDQEGKDRRQMGREAFLERVWQWKEESGSTITRQMRRMGTSCDWSRERFTMDEVLSRAVTEVFVRLYREGLIYRGKRLVNWDPVLQTAVSDLEVVSVEEQGSLWHILYPFEHRAENGEKGLIVATTRPETMLGDVAVAVHPEDVRYRHLIGHHVRLPLSERTIPIIADSYVDPAFGTGCVKITPAHDFNDYQVGLRHKLIPLSIFTLDGKINDNAPVEFQGLDRFDARKKVITDLQAQELLVETRPHKLMIPRGDRTNTVIEPMLTDQWYLAMEGLAKQGLAAVESGQVRFVPENWAHVYNQWLENIQDWCISRQLWWGHRIPAWYDEDGNVIVAYDLEEARKLSGKENLHQDEDVLDTWFSSALWPFSTLGWPEQTPELKTFLPGSVLVTGFDIIFFWVARMVMMSLHFTGEVPFREVYITGLIRDAEGQKMSKSKGNVLDPLDLIDGVALTELIRKRTTGLMNPKQAESIEKATRKQFPQGIPAFGADALRFTFASLASHGRDIKFDLQRCEGYRNFCNKLWNATRFVLMNCEGKDTGLDEGLPLNFSPADKWIIGRLQQAEQSVIQAFNEYRFDLAAREMYEFIWDEYCDWYVELAKVQLNSEDEARQRATRRTLVRVLETVLRQAHPIIPFITEELWQAVAPLAGKTGASIMCQPYPQPDQLRIDEQAAADIQLLKEVVNACRTLRGEMKLSPADRIPLLIEGDRARLINFFPHLQALARLSEVDILPGGLPDTDAPVAVVGDFRLMLKIEIDVKAERERLNKEILRVEAEISKARVKLDNPDFIQRAPEKVVQQEKGRLVTFSTTLKKLDEQLRKLD</sequence>
<organism>
    <name type="scientific">Nitrosomonas eutropha (strain DSM 101675 / C91 / Nm57)</name>
    <dbReference type="NCBI Taxonomy" id="335283"/>
    <lineage>
        <taxon>Bacteria</taxon>
        <taxon>Pseudomonadati</taxon>
        <taxon>Pseudomonadota</taxon>
        <taxon>Betaproteobacteria</taxon>
        <taxon>Nitrosomonadales</taxon>
        <taxon>Nitrosomonadaceae</taxon>
        <taxon>Nitrosomonas</taxon>
    </lineage>
</organism>
<gene>
    <name evidence="1" type="primary">valS</name>
    <name type="ordered locus">Neut_0602</name>
</gene>
<feature type="chain" id="PRO_1000022168" description="Valine--tRNA ligase">
    <location>
        <begin position="1"/>
        <end position="917"/>
    </location>
</feature>
<feature type="coiled-coil region" evidence="1">
    <location>
        <begin position="850"/>
        <end position="880"/>
    </location>
</feature>
<feature type="short sequence motif" description="'HIGH' region">
    <location>
        <begin position="44"/>
        <end position="54"/>
    </location>
</feature>
<feature type="short sequence motif" description="'KMSKS' region">
    <location>
        <begin position="527"/>
        <end position="531"/>
    </location>
</feature>
<feature type="binding site" evidence="1">
    <location>
        <position position="530"/>
    </location>
    <ligand>
        <name>ATP</name>
        <dbReference type="ChEBI" id="CHEBI:30616"/>
    </ligand>
</feature>
<name>SYV_NITEC</name>
<evidence type="ECO:0000255" key="1">
    <source>
        <dbReference type="HAMAP-Rule" id="MF_02004"/>
    </source>
</evidence>
<keyword id="KW-0030">Aminoacyl-tRNA synthetase</keyword>
<keyword id="KW-0067">ATP-binding</keyword>
<keyword id="KW-0175">Coiled coil</keyword>
<keyword id="KW-0963">Cytoplasm</keyword>
<keyword id="KW-0436">Ligase</keyword>
<keyword id="KW-0547">Nucleotide-binding</keyword>
<keyword id="KW-0648">Protein biosynthesis</keyword>